<dbReference type="EC" id="1.1.1.37"/>
<dbReference type="EMBL" id="AC005617">
    <property type="protein sequence ID" value="AAC63589.1"/>
    <property type="molecule type" value="Genomic_DNA"/>
</dbReference>
<dbReference type="EMBL" id="CP002685">
    <property type="protein sequence ID" value="AEC07353.1"/>
    <property type="molecule type" value="Genomic_DNA"/>
</dbReference>
<dbReference type="EMBL" id="AF428346">
    <property type="protein sequence ID" value="AAL16276.1"/>
    <property type="molecule type" value="mRNA"/>
</dbReference>
<dbReference type="EMBL" id="BT003009">
    <property type="protein sequence ID" value="AAO23574.1"/>
    <property type="molecule type" value="mRNA"/>
</dbReference>
<dbReference type="PIR" id="G84616">
    <property type="entry name" value="G84616"/>
</dbReference>
<dbReference type="RefSeq" id="NP_179863.1">
    <property type="nucleotide sequence ID" value="NM_127843.5"/>
</dbReference>
<dbReference type="SMR" id="O82399"/>
<dbReference type="BioGRID" id="2161">
    <property type="interactions" value="2"/>
</dbReference>
<dbReference type="FunCoup" id="O82399">
    <property type="interactions" value="3632"/>
</dbReference>
<dbReference type="IntAct" id="O82399">
    <property type="interactions" value="1"/>
</dbReference>
<dbReference type="STRING" id="3702.O82399"/>
<dbReference type="PaxDb" id="3702-AT2G22780.1"/>
<dbReference type="ProteomicsDB" id="238334"/>
<dbReference type="EnsemblPlants" id="AT2G22780.1">
    <property type="protein sequence ID" value="AT2G22780.1"/>
    <property type="gene ID" value="AT2G22780"/>
</dbReference>
<dbReference type="GeneID" id="816808"/>
<dbReference type="Gramene" id="AT2G22780.1">
    <property type="protein sequence ID" value="AT2G22780.1"/>
    <property type="gene ID" value="AT2G22780"/>
</dbReference>
<dbReference type="KEGG" id="ath:AT2G22780"/>
<dbReference type="Araport" id="AT2G22780"/>
<dbReference type="TAIR" id="AT2G22780">
    <property type="gene designation" value="PMDH1"/>
</dbReference>
<dbReference type="eggNOG" id="KOG1494">
    <property type="taxonomic scope" value="Eukaryota"/>
</dbReference>
<dbReference type="HOGENOM" id="CLU_047181_0_2_1"/>
<dbReference type="InParanoid" id="O82399"/>
<dbReference type="OMA" id="IVNAHGV"/>
<dbReference type="OrthoDB" id="4069699at2759"/>
<dbReference type="PhylomeDB" id="O82399"/>
<dbReference type="BioCyc" id="ARA:AT2G22780-MONOMER"/>
<dbReference type="BioCyc" id="MetaCyc:AT2G22780-MONOMER"/>
<dbReference type="CD-CODE" id="4299E36E">
    <property type="entry name" value="Nucleolus"/>
</dbReference>
<dbReference type="PRO" id="PR:O82399"/>
<dbReference type="Proteomes" id="UP000006548">
    <property type="component" value="Chromosome 2"/>
</dbReference>
<dbReference type="ExpressionAtlas" id="O82399">
    <property type="expression patterns" value="baseline and differential"/>
</dbReference>
<dbReference type="GO" id="GO:0009507">
    <property type="term" value="C:chloroplast"/>
    <property type="evidence" value="ECO:0007005"/>
    <property type="project" value="TAIR"/>
</dbReference>
<dbReference type="GO" id="GO:0005777">
    <property type="term" value="C:peroxisome"/>
    <property type="evidence" value="ECO:0000314"/>
    <property type="project" value="TAIR"/>
</dbReference>
<dbReference type="GO" id="GO:0030060">
    <property type="term" value="F:L-malate dehydrogenase (NAD+) activity"/>
    <property type="evidence" value="ECO:0007669"/>
    <property type="project" value="UniProtKB-EC"/>
</dbReference>
<dbReference type="GO" id="GO:0006097">
    <property type="term" value="P:glyoxylate cycle"/>
    <property type="evidence" value="ECO:0007669"/>
    <property type="project" value="UniProtKB-KW"/>
</dbReference>
<dbReference type="GO" id="GO:0006108">
    <property type="term" value="P:malate metabolic process"/>
    <property type="evidence" value="ECO:0007669"/>
    <property type="project" value="InterPro"/>
</dbReference>
<dbReference type="GO" id="GO:0031998">
    <property type="term" value="P:regulation of fatty acid beta-oxidation"/>
    <property type="evidence" value="ECO:0000315"/>
    <property type="project" value="TAIR"/>
</dbReference>
<dbReference type="GO" id="GO:0080093">
    <property type="term" value="P:regulation of photorespiration"/>
    <property type="evidence" value="ECO:0000315"/>
    <property type="project" value="TAIR"/>
</dbReference>
<dbReference type="GO" id="GO:0006099">
    <property type="term" value="P:tricarboxylic acid cycle"/>
    <property type="evidence" value="ECO:0007669"/>
    <property type="project" value="UniProtKB-KW"/>
</dbReference>
<dbReference type="CDD" id="cd01337">
    <property type="entry name" value="MDH_glyoxysomal_mitochondrial"/>
    <property type="match status" value="1"/>
</dbReference>
<dbReference type="FunFam" id="3.40.50.720:FF:000013">
    <property type="entry name" value="Malate dehydrogenase"/>
    <property type="match status" value="1"/>
</dbReference>
<dbReference type="FunFam" id="3.90.110.10:FF:000001">
    <property type="entry name" value="Malate dehydrogenase"/>
    <property type="match status" value="1"/>
</dbReference>
<dbReference type="Gene3D" id="3.90.110.10">
    <property type="entry name" value="Lactate dehydrogenase/glycoside hydrolase, family 4, C-terminal"/>
    <property type="match status" value="1"/>
</dbReference>
<dbReference type="Gene3D" id="3.40.50.720">
    <property type="entry name" value="NAD(P)-binding Rossmann-like Domain"/>
    <property type="match status" value="1"/>
</dbReference>
<dbReference type="InterPro" id="IPR001557">
    <property type="entry name" value="L-lactate/malate_DH"/>
</dbReference>
<dbReference type="InterPro" id="IPR022383">
    <property type="entry name" value="Lactate/malate_DH_C"/>
</dbReference>
<dbReference type="InterPro" id="IPR001236">
    <property type="entry name" value="Lactate/malate_DH_N"/>
</dbReference>
<dbReference type="InterPro" id="IPR015955">
    <property type="entry name" value="Lactate_DH/Glyco_Ohase_4_C"/>
</dbReference>
<dbReference type="InterPro" id="IPR001252">
    <property type="entry name" value="Malate_DH_AS"/>
</dbReference>
<dbReference type="InterPro" id="IPR010097">
    <property type="entry name" value="Malate_DH_type1"/>
</dbReference>
<dbReference type="InterPro" id="IPR036291">
    <property type="entry name" value="NAD(P)-bd_dom_sf"/>
</dbReference>
<dbReference type="NCBIfam" id="TIGR01772">
    <property type="entry name" value="MDH_euk_gproteo"/>
    <property type="match status" value="1"/>
</dbReference>
<dbReference type="PANTHER" id="PTHR11540">
    <property type="entry name" value="MALATE AND LACTATE DEHYDROGENASE"/>
    <property type="match status" value="1"/>
</dbReference>
<dbReference type="PANTHER" id="PTHR11540:SF71">
    <property type="entry name" value="MALATE DEHYDROGENASE 1, PEROXISOMAL"/>
    <property type="match status" value="1"/>
</dbReference>
<dbReference type="Pfam" id="PF02866">
    <property type="entry name" value="Ldh_1_C"/>
    <property type="match status" value="1"/>
</dbReference>
<dbReference type="Pfam" id="PF00056">
    <property type="entry name" value="Ldh_1_N"/>
    <property type="match status" value="1"/>
</dbReference>
<dbReference type="PIRSF" id="PIRSF000102">
    <property type="entry name" value="Lac_mal_DH"/>
    <property type="match status" value="1"/>
</dbReference>
<dbReference type="SUPFAM" id="SSF56327">
    <property type="entry name" value="LDH C-terminal domain-like"/>
    <property type="match status" value="1"/>
</dbReference>
<dbReference type="SUPFAM" id="SSF51735">
    <property type="entry name" value="NAD(P)-binding Rossmann-fold domains"/>
    <property type="match status" value="1"/>
</dbReference>
<dbReference type="PROSITE" id="PS00068">
    <property type="entry name" value="MDH"/>
    <property type="match status" value="1"/>
</dbReference>
<proteinExistence type="evidence at protein level"/>
<accession>O82399</accession>
<reference key="1">
    <citation type="journal article" date="1999" name="Nature">
        <title>Sequence and analysis of chromosome 2 of the plant Arabidopsis thaliana.</title>
        <authorList>
            <person name="Lin X."/>
            <person name="Kaul S."/>
            <person name="Rounsley S.D."/>
            <person name="Shea T.P."/>
            <person name="Benito M.-I."/>
            <person name="Town C.D."/>
            <person name="Fujii C.Y."/>
            <person name="Mason T.M."/>
            <person name="Bowman C.L."/>
            <person name="Barnstead M.E."/>
            <person name="Feldblyum T.V."/>
            <person name="Buell C.R."/>
            <person name="Ketchum K.A."/>
            <person name="Lee J.J."/>
            <person name="Ronning C.M."/>
            <person name="Koo H.L."/>
            <person name="Moffat K.S."/>
            <person name="Cronin L.A."/>
            <person name="Shen M."/>
            <person name="Pai G."/>
            <person name="Van Aken S."/>
            <person name="Umayam L."/>
            <person name="Tallon L.J."/>
            <person name="Gill J.E."/>
            <person name="Adams M.D."/>
            <person name="Carrera A.J."/>
            <person name="Creasy T.H."/>
            <person name="Goodman H.M."/>
            <person name="Somerville C.R."/>
            <person name="Copenhaver G.P."/>
            <person name="Preuss D."/>
            <person name="Nierman W.C."/>
            <person name="White O."/>
            <person name="Eisen J.A."/>
            <person name="Salzberg S.L."/>
            <person name="Fraser C.M."/>
            <person name="Venter J.C."/>
        </authorList>
    </citation>
    <scope>NUCLEOTIDE SEQUENCE [LARGE SCALE GENOMIC DNA]</scope>
    <source>
        <strain>cv. Columbia</strain>
    </source>
</reference>
<reference key="2">
    <citation type="journal article" date="2017" name="Plant J.">
        <title>Araport11: a complete reannotation of the Arabidopsis thaliana reference genome.</title>
        <authorList>
            <person name="Cheng C.Y."/>
            <person name="Krishnakumar V."/>
            <person name="Chan A.P."/>
            <person name="Thibaud-Nissen F."/>
            <person name="Schobel S."/>
            <person name="Town C.D."/>
        </authorList>
    </citation>
    <scope>GENOME REANNOTATION</scope>
    <source>
        <strain>cv. Columbia</strain>
    </source>
</reference>
<reference key="3">
    <citation type="journal article" date="2003" name="Science">
        <title>Empirical analysis of transcriptional activity in the Arabidopsis genome.</title>
        <authorList>
            <person name="Yamada K."/>
            <person name="Lim J."/>
            <person name="Dale J.M."/>
            <person name="Chen H."/>
            <person name="Shinn P."/>
            <person name="Palm C.J."/>
            <person name="Southwick A.M."/>
            <person name="Wu H.C."/>
            <person name="Kim C.J."/>
            <person name="Nguyen M."/>
            <person name="Pham P.K."/>
            <person name="Cheuk R.F."/>
            <person name="Karlin-Newmann G."/>
            <person name="Liu S.X."/>
            <person name="Lam B."/>
            <person name="Sakano H."/>
            <person name="Wu T."/>
            <person name="Yu G."/>
            <person name="Miranda M."/>
            <person name="Quach H.L."/>
            <person name="Tripp M."/>
            <person name="Chang C.H."/>
            <person name="Lee J.M."/>
            <person name="Toriumi M.J."/>
            <person name="Chan M.M."/>
            <person name="Tang C.C."/>
            <person name="Onodera C.S."/>
            <person name="Deng J.M."/>
            <person name="Akiyama K."/>
            <person name="Ansari Y."/>
            <person name="Arakawa T."/>
            <person name="Banh J."/>
            <person name="Banno F."/>
            <person name="Bowser L."/>
            <person name="Brooks S.Y."/>
            <person name="Carninci P."/>
            <person name="Chao Q."/>
            <person name="Choy N."/>
            <person name="Enju A."/>
            <person name="Goldsmith A.D."/>
            <person name="Gurjal M."/>
            <person name="Hansen N.F."/>
            <person name="Hayashizaki Y."/>
            <person name="Johnson-Hopson C."/>
            <person name="Hsuan V.W."/>
            <person name="Iida K."/>
            <person name="Karnes M."/>
            <person name="Khan S."/>
            <person name="Koesema E."/>
            <person name="Ishida J."/>
            <person name="Jiang P.X."/>
            <person name="Jones T."/>
            <person name="Kawai J."/>
            <person name="Kamiya A."/>
            <person name="Meyers C."/>
            <person name="Nakajima M."/>
            <person name="Narusaka M."/>
            <person name="Seki M."/>
            <person name="Sakurai T."/>
            <person name="Satou M."/>
            <person name="Tamse R."/>
            <person name="Vaysberg M."/>
            <person name="Wallender E.K."/>
            <person name="Wong C."/>
            <person name="Yamamura Y."/>
            <person name="Yuan S."/>
            <person name="Shinozaki K."/>
            <person name="Davis R.W."/>
            <person name="Theologis A."/>
            <person name="Ecker J.R."/>
        </authorList>
    </citation>
    <scope>NUCLEOTIDE SEQUENCE [LARGE SCALE MRNA]</scope>
    <source>
        <strain>cv. Columbia</strain>
    </source>
</reference>
<reference key="4">
    <citation type="journal article" date="2007" name="Plant Cell">
        <title>Proteome analysis of Arabidopsis leaf peroxisomes reveals novel targeting peptides, metabolic pathways, and defense mechanisms.</title>
        <authorList>
            <person name="Reumann S."/>
            <person name="Babujee L."/>
            <person name="Ma C."/>
            <person name="Wienkoop S."/>
            <person name="Siemsen T."/>
            <person name="Antonicelli G.E."/>
            <person name="Rasche N."/>
            <person name="Lueder F."/>
            <person name="Weckwerth W."/>
            <person name="Jahn O."/>
        </authorList>
    </citation>
    <scope>IDENTIFICATION BY MASS SPECTROMETRY</scope>
</reference>
<reference key="5">
    <citation type="journal article" date="2007" name="Plant J.">
        <title>Arabidopsis peroxisomal malate dehydrogenase functions in beta-oxidation but not in the glyoxylate cycle.</title>
        <authorList>
            <person name="Pracharoenwattana I."/>
            <person name="Cornah J.E."/>
            <person name="Smith S.M."/>
        </authorList>
    </citation>
    <scope>FUNCTION</scope>
    <scope>SUBCELLULAR LOCATION</scope>
    <scope>DISRUPTION PHENOTYPE</scope>
</reference>
<reference key="6">
    <citation type="journal article" date="2008" name="Plant Physiol.">
        <title>Peroxisomal malate dehydrogenase is not essential for photorespiration in Arabidopsis but its absence causes an increase in the stoichiometry of photorespiratory CO2 release.</title>
        <authorList>
            <person name="Cousins A.B."/>
            <person name="Pracharoenwattana I."/>
            <person name="Zhou W."/>
            <person name="Smith S.M."/>
            <person name="Badger M.R."/>
        </authorList>
    </citation>
    <scope>FUNCTION</scope>
</reference>
<reference key="7">
    <citation type="journal article" date="2010" name="Plant Mol. Biol.">
        <title>Fatty acid beta-oxidation in germinating Arabidopsis seeds is supported by peroxisomal hydroxypyruvate reductase when malate dehydrogenase is absent.</title>
        <authorList>
            <person name="Pracharoenwattana I."/>
            <person name="Zhou W."/>
            <person name="Smith S.M."/>
        </authorList>
    </citation>
    <scope>FUNCTION</scope>
</reference>
<reference key="8">
    <citation type="journal article" date="2010" name="Plant Physiol.">
        <title>Mitochondrial malate dehydrogenase lowers leaf respiration and alters photorespiration and plant growth in Arabidopsis.</title>
        <authorList>
            <person name="Tomaz T."/>
            <person name="Bagard M."/>
            <person name="Pracharoenwattana I."/>
            <person name="Linden P."/>
            <person name="Lee C.P."/>
            <person name="Carroll A.J."/>
            <person name="Stroeher E."/>
            <person name="Smith S.M."/>
            <person name="Gardestroem P."/>
            <person name="Millar A.H."/>
        </authorList>
    </citation>
    <scope>FUNCTION</scope>
    <scope>TISSUE SPECIFICITY</scope>
</reference>
<feature type="chain" id="PRO_0000018635" description="Malate dehydrogenase 1, peroxisomal">
    <location>
        <begin position="1"/>
        <end position="354"/>
    </location>
</feature>
<feature type="region of interest" description="Peroxisomal targeting signal PTS2" evidence="12">
    <location>
        <begin position="6"/>
        <end position="14"/>
    </location>
</feature>
<feature type="active site" description="Proton acceptor" evidence="2">
    <location>
        <position position="218"/>
    </location>
</feature>
<feature type="binding site" evidence="3">
    <location>
        <begin position="49"/>
        <end position="55"/>
    </location>
    <ligand>
        <name>NAD(+)</name>
        <dbReference type="ChEBI" id="CHEBI:57540"/>
    </ligand>
</feature>
<feature type="binding site" evidence="3">
    <location>
        <position position="75"/>
    </location>
    <ligand>
        <name>NAD(+)</name>
        <dbReference type="ChEBI" id="CHEBI:57540"/>
    </ligand>
</feature>
<feature type="binding site" evidence="2">
    <location>
        <position position="122"/>
    </location>
    <ligand>
        <name>substrate</name>
    </ligand>
</feature>
<feature type="binding site" evidence="2">
    <location>
        <position position="128"/>
    </location>
    <ligand>
        <name>substrate</name>
    </ligand>
</feature>
<feature type="binding site" evidence="3">
    <location>
        <position position="135"/>
    </location>
    <ligand>
        <name>NAD(+)</name>
        <dbReference type="ChEBI" id="CHEBI:57540"/>
    </ligand>
</feature>
<feature type="binding site" evidence="3">
    <location>
        <begin position="158"/>
        <end position="160"/>
    </location>
    <ligand>
        <name>NAD(+)</name>
        <dbReference type="ChEBI" id="CHEBI:57540"/>
    </ligand>
</feature>
<feature type="binding site" evidence="2">
    <location>
        <position position="160"/>
    </location>
    <ligand>
        <name>substrate</name>
    </ligand>
</feature>
<feature type="binding site" evidence="2">
    <location>
        <position position="194"/>
    </location>
    <ligand>
        <name>substrate</name>
    </ligand>
</feature>
<feature type="binding site" evidence="3">
    <location>
        <position position="269"/>
    </location>
    <ligand>
        <name>NAD(+)</name>
        <dbReference type="ChEBI" id="CHEBI:57540"/>
    </ligand>
</feature>
<sequence length="354" mass="37466">MDPNQRIARISAHLNPPNLHNQIADGSGLNRVACRAKGGSPGFKVAILGAAGGIGQPLAMLMKMNPLVSVLHLYDVANAPGVTADISHMDTSAVVRGFLGQPQLEEALTGMDLVIIPAGVPRKPGMTRDDLFNINAGIVRTLSEAIAKCCPKAIVNIISNPVNSTVPIAAEVFKKAGTFDPKKLMGVTMLDVVRANTFVAEVMSLDPREVEVPVVGGHAGVTILPLLSQVKPPCSFTQKEIEYLTDRIQNGGTEVVEAKAGAGSATLSMAYAAVEFADACLRGLRGDANIVECAYVASHVTELPFFASKVRLGRCGIDEVYGLGPLNEYERMGLEKAKKELSVSIHKGVTFAKK</sequence>
<protein>
    <recommendedName>
        <fullName evidence="11">Malate dehydrogenase 1, peroxisomal</fullName>
        <ecNumber>1.1.1.37</ecNumber>
    </recommendedName>
    <alternativeName>
        <fullName evidence="11">Peroxisomal NAD-dependent malate dehydrogenase 1</fullName>
        <shortName evidence="10">pxNAD-MDH1</shortName>
    </alternativeName>
    <alternativeName>
        <fullName evidence="10">Peroxisomal malate dehydrogenase 1</fullName>
        <shortName evidence="11">Peroxisomal MDH1</shortName>
    </alternativeName>
</protein>
<organism>
    <name type="scientific">Arabidopsis thaliana</name>
    <name type="common">Mouse-ear cress</name>
    <dbReference type="NCBI Taxonomy" id="3702"/>
    <lineage>
        <taxon>Eukaryota</taxon>
        <taxon>Viridiplantae</taxon>
        <taxon>Streptophyta</taxon>
        <taxon>Embryophyta</taxon>
        <taxon>Tracheophyta</taxon>
        <taxon>Spermatophyta</taxon>
        <taxon>Magnoliopsida</taxon>
        <taxon>eudicotyledons</taxon>
        <taxon>Gunneridae</taxon>
        <taxon>Pentapetalae</taxon>
        <taxon>rosids</taxon>
        <taxon>malvids</taxon>
        <taxon>Brassicales</taxon>
        <taxon>Brassicaceae</taxon>
        <taxon>Camelineae</taxon>
        <taxon>Arabidopsis</taxon>
    </lineage>
</organism>
<gene>
    <name evidence="9" type="primary">PMDH1</name>
    <name type="ordered locus">At2g22780</name>
    <name type="ORF">T30L20.4</name>
</gene>
<evidence type="ECO:0000250" key="1"/>
<evidence type="ECO:0000250" key="2">
    <source>
        <dbReference type="UniProtKB" id="P11708"/>
    </source>
</evidence>
<evidence type="ECO:0000250" key="3">
    <source>
        <dbReference type="UniProtKB" id="P40926"/>
    </source>
</evidence>
<evidence type="ECO:0000255" key="4">
    <source>
        <dbReference type="PROSITE-ProRule" id="PRU10004"/>
    </source>
</evidence>
<evidence type="ECO:0000269" key="5">
    <source>
    </source>
</evidence>
<evidence type="ECO:0000269" key="6">
    <source>
    </source>
</evidence>
<evidence type="ECO:0000269" key="7">
    <source>
    </source>
</evidence>
<evidence type="ECO:0000269" key="8">
    <source>
    </source>
</evidence>
<evidence type="ECO:0000303" key="9">
    <source>
    </source>
</evidence>
<evidence type="ECO:0000303" key="10">
    <source>
    </source>
</evidence>
<evidence type="ECO:0000305" key="11"/>
<evidence type="ECO:0000305" key="12">
    <source>
    </source>
</evidence>
<evidence type="ECO:0000305" key="13">
    <source>
    </source>
</evidence>
<comment type="function">
    <text evidence="5 6 7 13">Catalyzes a reversible NAD-dependent dehydrogenase reaction involved in central metabolism and redox homeostasis between organelle compartments (Probable). Peroxisomal NAD-dependent malate dehydrogenase involved in fatty acid beta-oxidation. Reoxidizes NADH from the beta-oxidation and provides NAD for the conversion of fatty acyl-CoA to acetyl-CoA. Does not participate directly in the glyoxylate cycle (PubMed:17376163, PubMed:19812894). Required for maintenance of photosynthetic rates under photorespiratory conditions, and carbon flow during photorespiration. Supplies NADH reductant to the peroxisomal hydroxypyruvate reductase (HPR), which reduces hydroxypyruvate into glycerate in the photorespiratory cycle (PubMed:18685043).</text>
</comment>
<comment type="catalytic activity">
    <reaction evidence="4">
        <text>(S)-malate + NAD(+) = oxaloacetate + NADH + H(+)</text>
        <dbReference type="Rhea" id="RHEA:21432"/>
        <dbReference type="ChEBI" id="CHEBI:15378"/>
        <dbReference type="ChEBI" id="CHEBI:15589"/>
        <dbReference type="ChEBI" id="CHEBI:16452"/>
        <dbReference type="ChEBI" id="CHEBI:57540"/>
        <dbReference type="ChEBI" id="CHEBI:57945"/>
        <dbReference type="EC" id="1.1.1.37"/>
    </reaction>
</comment>
<comment type="subunit">
    <text evidence="1">Homodimer.</text>
</comment>
<comment type="subcellular location">
    <subcellularLocation>
        <location evidence="5">Peroxisome</location>
    </subcellularLocation>
</comment>
<comment type="tissue specificity">
    <text evidence="8">Expressed in rosette leaves at low levels.</text>
</comment>
<comment type="disruption phenotype">
    <text evidence="5">No visible phenotype under normal growth conditions, but the double mutant plants pmdh1 and pmdh2 show seedling growth arrest 5 days after seed imbibition.</text>
</comment>
<comment type="similarity">
    <text evidence="11">Belongs to the LDH/MDH superfamily. MDH type 1 family.</text>
</comment>
<name>MDHX1_ARATH</name>
<keyword id="KW-0329">Glyoxylate bypass</keyword>
<keyword id="KW-0520">NAD</keyword>
<keyword id="KW-0560">Oxidoreductase</keyword>
<keyword id="KW-0576">Peroxisome</keyword>
<keyword id="KW-1185">Reference proteome</keyword>
<keyword id="KW-0816">Tricarboxylic acid cycle</keyword>